<protein>
    <recommendedName>
        <fullName>Dynactin subunit 4</fullName>
    </recommendedName>
    <alternativeName>
        <fullName>Dynactin subunit p62</fullName>
    </alternativeName>
</protein>
<name>DCTN4_PONAB</name>
<feature type="initiator methionine" description="Removed" evidence="4">
    <location>
        <position position="1"/>
    </location>
</feature>
<feature type="chain" id="PRO_0000079825" description="Dynactin subunit 4">
    <location>
        <begin position="2"/>
        <end position="460"/>
    </location>
</feature>
<feature type="coiled-coil region" evidence="5">
    <location>
        <begin position="152"/>
        <end position="172"/>
    </location>
</feature>
<feature type="modified residue" description="N-acetylalanine" evidence="4">
    <location>
        <position position="2"/>
    </location>
</feature>
<feature type="modified residue" description="Phosphoserine" evidence="4">
    <location>
        <position position="196"/>
    </location>
</feature>
<feature type="modified residue" description="Phosphothreonine" evidence="3">
    <location>
        <position position="407"/>
    </location>
</feature>
<feature type="cross-link" description="Glycyl lysine isopeptide (Lys-Gly) (interchain with G-Cter in SUMO2)" evidence="4">
    <location>
        <position position="215"/>
    </location>
</feature>
<gene>
    <name type="primary">DCTN4</name>
</gene>
<comment type="function">
    <text evidence="1">Part of the dynactin complex that activates the molecular motor dynein for ultra-processive transport along microtubules.</text>
</comment>
<comment type="subunit">
    <text evidence="1 2 4">Subunit of dynactin, a multiprotein complex part of a tripartite complex with dynein and a adapter, such as BICDL1, BICD2 or HOOK3. The dynactin complex is built around ACTR1A/ACTB filament and consists of an actin-related filament composed of a shoulder domain, a pointed end and a barbed end. Its length is defined by its flexible shoulder domain. The soulder is composed of 2 DCTN1 subunits, 4 DCTN2 and 2 DCTN3. The 4 DCNT2 (via N-terminus) bind the ACTR1A filament and act as molecular rulers to determine the length. The pointed end is important for binding dynein-dynactin cargo adapters. Consists of 4 subunits: ACTR10, DCNT4, DCTN5 and DCTN6. The barbed end is composed of a CAPZA1:CAPZB heterodimers, which binds ACTR1A/ACTB filament and dynactin and stabilizes dynactin (By similarity). Interacts with ATP7B, but not ATP7A, in a copper-dependent manner (By similarity). Interacts with ANK2; this interaction is required for localization at costameres (By similarity). Interacts with N4BP2L1 (By similarity).</text>
</comment>
<comment type="subcellular location">
    <subcellularLocation>
        <location evidence="4">Cytoplasm</location>
        <location evidence="4">Cytoskeleton</location>
    </subcellularLocation>
    <subcellularLocation>
        <location evidence="4">Cytoplasm</location>
        <location evidence="4">Cytoskeleton</location>
        <location evidence="4">Microtubule organizing center</location>
        <location evidence="4">Centrosome</location>
    </subcellularLocation>
    <subcellularLocation>
        <location evidence="3">Cytoplasm</location>
        <location evidence="3">Cytoskeleton</location>
        <location evidence="3">Stress fiber</location>
    </subcellularLocation>
    <subcellularLocation>
        <location evidence="3">Cytoplasm</location>
        <location evidence="3">Cell cortex</location>
    </subcellularLocation>
    <subcellularLocation>
        <location evidence="2">Cytoplasm</location>
        <location evidence="2">Myofibril</location>
        <location evidence="2">Sarcomere</location>
    </subcellularLocation>
    <text evidence="2 3 4">Has a punctate cytoplasmic distribution as well as centrosomal distribution typical of dynactin (By similarity). Overexpression in cultured mammalian cells revealed colocalization with cortical actin, stress fibers, and focal adhesion sites, sites of potential interaction between microtubules and the cell cortex (By similarity). In skeletal muscles, costamere localization requires the presence of ANK2 (By similarity).</text>
</comment>
<comment type="similarity">
    <text evidence="6">Belongs to the dynactin subunit 4 family.</text>
</comment>
<evidence type="ECO:0000250" key="1">
    <source>
        <dbReference type="UniProtKB" id="A0A4X1TB62"/>
    </source>
</evidence>
<evidence type="ECO:0000250" key="2">
    <source>
        <dbReference type="UniProtKB" id="Q8CBY8"/>
    </source>
</evidence>
<evidence type="ECO:0000250" key="3">
    <source>
        <dbReference type="UniProtKB" id="Q9QUR2"/>
    </source>
</evidence>
<evidence type="ECO:0000250" key="4">
    <source>
        <dbReference type="UniProtKB" id="Q9UJW0"/>
    </source>
</evidence>
<evidence type="ECO:0000255" key="5"/>
<evidence type="ECO:0000305" key="6"/>
<dbReference type="EMBL" id="CR860012">
    <property type="protein sequence ID" value="CAH92163.1"/>
    <property type="molecule type" value="mRNA"/>
</dbReference>
<dbReference type="RefSeq" id="NP_001126268.1">
    <property type="nucleotide sequence ID" value="NM_001132796.1"/>
</dbReference>
<dbReference type="SMR" id="Q5R7U7"/>
<dbReference type="STRING" id="9601.ENSPPYP00000017856"/>
<dbReference type="GeneID" id="100173240"/>
<dbReference type="KEGG" id="pon:100173240"/>
<dbReference type="CTD" id="51164"/>
<dbReference type="eggNOG" id="KOG3896">
    <property type="taxonomic scope" value="Eukaryota"/>
</dbReference>
<dbReference type="InParanoid" id="Q5R7U7"/>
<dbReference type="OrthoDB" id="283815at2759"/>
<dbReference type="Proteomes" id="UP000001595">
    <property type="component" value="Unplaced"/>
</dbReference>
<dbReference type="GO" id="GO:0005938">
    <property type="term" value="C:cell cortex"/>
    <property type="evidence" value="ECO:0007669"/>
    <property type="project" value="UniProtKB-SubCell"/>
</dbReference>
<dbReference type="GO" id="GO:0005813">
    <property type="term" value="C:centrosome"/>
    <property type="evidence" value="ECO:0007669"/>
    <property type="project" value="UniProtKB-SubCell"/>
</dbReference>
<dbReference type="GO" id="GO:0005869">
    <property type="term" value="C:dynactin complex"/>
    <property type="evidence" value="ECO:0007669"/>
    <property type="project" value="InterPro"/>
</dbReference>
<dbReference type="GO" id="GO:0030017">
    <property type="term" value="C:sarcomere"/>
    <property type="evidence" value="ECO:0007669"/>
    <property type="project" value="UniProtKB-SubCell"/>
</dbReference>
<dbReference type="GO" id="GO:0001725">
    <property type="term" value="C:stress fiber"/>
    <property type="evidence" value="ECO:0007669"/>
    <property type="project" value="UniProtKB-SubCell"/>
</dbReference>
<dbReference type="InterPro" id="IPR008603">
    <property type="entry name" value="DCTN4"/>
</dbReference>
<dbReference type="PANTHER" id="PTHR13034">
    <property type="entry name" value="DYNACTIN P62 SUBUNIT"/>
    <property type="match status" value="1"/>
</dbReference>
<dbReference type="PANTHER" id="PTHR13034:SF2">
    <property type="entry name" value="DYNACTIN SUBUNIT 4"/>
    <property type="match status" value="1"/>
</dbReference>
<dbReference type="Pfam" id="PF05502">
    <property type="entry name" value="Dynactin_p62"/>
    <property type="match status" value="2"/>
</dbReference>
<sequence>MASLLQSDRVVYLVQGEKKVRAPLSQLYFCRYCSELRSLECVSHEVDSHYCPSCLENMPSAEAKLKKNRCANCFDCPGCMHTLSTRATSISTQLPDDPAKTTMKKAYYLACGFCRWTSRDVGMADKSVASGGWQEPENPHTQRMNKLIEYYQQLAQKEKVERDRKKLARRRNYMPLAFSDKYGLGTRLQRPRAGASISTLAGLSLKEGEDQKEIKIEPAQAVDEVEPLPEDYYTRPVNLTEVTTLQQRLLQPDFQPVCASQLYPRHKHLLIKRSLRCRKCEHNLSKPEFNPTSIKFKIQQVAVNYIPEVRIMSIPNLRYMKESQVLLTLTNPVENLTHVTLLECEEGDPDNTNSTAKVVVPPKELVLAGKDAAAEYDELAEPQDFQDDPDIIAFRKANKVGIFIKVTPQREEGEVTVCFKMKHDFKNLAAPIRPIEESDQGTEVIWLTQHVELSLGPLLP</sequence>
<accession>Q5R7U7</accession>
<keyword id="KW-0007">Acetylation</keyword>
<keyword id="KW-0175">Coiled coil</keyword>
<keyword id="KW-0963">Cytoplasm</keyword>
<keyword id="KW-0206">Cytoskeleton</keyword>
<keyword id="KW-1017">Isopeptide bond</keyword>
<keyword id="KW-0597">Phosphoprotein</keyword>
<keyword id="KW-1185">Reference proteome</keyword>
<keyword id="KW-0832">Ubl conjugation</keyword>
<reference key="1">
    <citation type="submission" date="2004-11" db="EMBL/GenBank/DDBJ databases">
        <authorList>
            <consortium name="The German cDNA consortium"/>
        </authorList>
    </citation>
    <scope>NUCLEOTIDE SEQUENCE [LARGE SCALE MRNA]</scope>
    <source>
        <tissue>Brain cortex</tissue>
    </source>
</reference>
<proteinExistence type="evidence at transcript level"/>
<organism>
    <name type="scientific">Pongo abelii</name>
    <name type="common">Sumatran orangutan</name>
    <name type="synonym">Pongo pygmaeus abelii</name>
    <dbReference type="NCBI Taxonomy" id="9601"/>
    <lineage>
        <taxon>Eukaryota</taxon>
        <taxon>Metazoa</taxon>
        <taxon>Chordata</taxon>
        <taxon>Craniata</taxon>
        <taxon>Vertebrata</taxon>
        <taxon>Euteleostomi</taxon>
        <taxon>Mammalia</taxon>
        <taxon>Eutheria</taxon>
        <taxon>Euarchontoglires</taxon>
        <taxon>Primates</taxon>
        <taxon>Haplorrhini</taxon>
        <taxon>Catarrhini</taxon>
        <taxon>Hominidae</taxon>
        <taxon>Pongo</taxon>
    </lineage>
</organism>